<comment type="function">
    <text evidence="1">Catalyzes the conversion of glucosamine-6-phosphate to glucosamine-1-phosphate.</text>
</comment>
<comment type="catalytic activity">
    <reaction evidence="1">
        <text>alpha-D-glucosamine 1-phosphate = D-glucosamine 6-phosphate</text>
        <dbReference type="Rhea" id="RHEA:23424"/>
        <dbReference type="ChEBI" id="CHEBI:58516"/>
        <dbReference type="ChEBI" id="CHEBI:58725"/>
        <dbReference type="EC" id="5.4.2.10"/>
    </reaction>
</comment>
<comment type="cofactor">
    <cofactor evidence="1">
        <name>Mg(2+)</name>
        <dbReference type="ChEBI" id="CHEBI:18420"/>
    </cofactor>
    <text evidence="1">Binds 1 Mg(2+) ion per subunit.</text>
</comment>
<comment type="PTM">
    <text evidence="1">Activated by phosphorylation.</text>
</comment>
<comment type="similarity">
    <text evidence="1">Belongs to the phosphohexose mutase family.</text>
</comment>
<gene>
    <name evidence="1" type="primary">glmM</name>
    <name type="ordered locus">BCAH187_A0201</name>
</gene>
<accession>B7HQZ0</accession>
<name>GLMM_BACC7</name>
<organism>
    <name type="scientific">Bacillus cereus (strain AH187)</name>
    <dbReference type="NCBI Taxonomy" id="405534"/>
    <lineage>
        <taxon>Bacteria</taxon>
        <taxon>Bacillati</taxon>
        <taxon>Bacillota</taxon>
        <taxon>Bacilli</taxon>
        <taxon>Bacillales</taxon>
        <taxon>Bacillaceae</taxon>
        <taxon>Bacillus</taxon>
        <taxon>Bacillus cereus group</taxon>
    </lineage>
</organism>
<proteinExistence type="inferred from homology"/>
<reference key="1">
    <citation type="submission" date="2008-10" db="EMBL/GenBank/DDBJ databases">
        <title>Genome sequence of Bacillus cereus AH187.</title>
        <authorList>
            <person name="Dodson R.J."/>
            <person name="Durkin A.S."/>
            <person name="Rosovitz M.J."/>
            <person name="Rasko D.A."/>
            <person name="Kolsto A.B."/>
            <person name="Okstad O.A."/>
            <person name="Ravel J."/>
            <person name="Sutton G."/>
        </authorList>
    </citation>
    <scope>NUCLEOTIDE SEQUENCE [LARGE SCALE GENOMIC DNA]</scope>
    <source>
        <strain>AH187</strain>
    </source>
</reference>
<sequence length="448" mass="48417">MGKYFGTDGVRGVANKELTPELAFKIGRFGGYVLTKDTDRPKVIIGRDTRISGHMLEGALVAGLLSTGAEVMRLGVISTPGVAYLTKALDAQAGVMISASHNPVQDNGIKFFGSDGFKLTDEQEAEIEALLDKEVDELPRPTGTNLGQVSDYFEGGQKYLQYIKQTVEEDFSGLHIALDCAHGATSSLAPYLFADLEADISTMGTSPNGMNINDGVGSTHPEVLAELVKEKGADIGLAFDGDGDRLIAVDEKGNIVDGDQIMFICAKYMKETGQLKHNTVVSTVMSNLGFYKALEANGITSDKTAVGDRYVMEEMKRGGYNLGGEQSGHIILLDYITTGDGMLSALQLVNIMKMTKKPLSELAGEMTKFPQLLVNVRVTDKKLALENEKIKEIIRVVEEEMNGDGRILVRPSGTEPLIRVMAEAPTQEVCDAYVHRIVEVVKAEVGAE</sequence>
<keyword id="KW-0413">Isomerase</keyword>
<keyword id="KW-0460">Magnesium</keyword>
<keyword id="KW-0479">Metal-binding</keyword>
<keyword id="KW-0597">Phosphoprotein</keyword>
<evidence type="ECO:0000255" key="1">
    <source>
        <dbReference type="HAMAP-Rule" id="MF_01554"/>
    </source>
</evidence>
<dbReference type="EC" id="5.4.2.10" evidence="1"/>
<dbReference type="EMBL" id="CP001177">
    <property type="protein sequence ID" value="ACJ78572.1"/>
    <property type="molecule type" value="Genomic_DNA"/>
</dbReference>
<dbReference type="SMR" id="B7HQZ0"/>
<dbReference type="KEGG" id="bcr:BCAH187_A0201"/>
<dbReference type="HOGENOM" id="CLU_016950_7_0_9"/>
<dbReference type="Proteomes" id="UP000002214">
    <property type="component" value="Chromosome"/>
</dbReference>
<dbReference type="GO" id="GO:0005829">
    <property type="term" value="C:cytosol"/>
    <property type="evidence" value="ECO:0007669"/>
    <property type="project" value="TreeGrafter"/>
</dbReference>
<dbReference type="GO" id="GO:0000287">
    <property type="term" value="F:magnesium ion binding"/>
    <property type="evidence" value="ECO:0007669"/>
    <property type="project" value="UniProtKB-UniRule"/>
</dbReference>
<dbReference type="GO" id="GO:0008966">
    <property type="term" value="F:phosphoglucosamine mutase activity"/>
    <property type="evidence" value="ECO:0007669"/>
    <property type="project" value="UniProtKB-UniRule"/>
</dbReference>
<dbReference type="GO" id="GO:0004615">
    <property type="term" value="F:phosphomannomutase activity"/>
    <property type="evidence" value="ECO:0007669"/>
    <property type="project" value="TreeGrafter"/>
</dbReference>
<dbReference type="GO" id="GO:0005975">
    <property type="term" value="P:carbohydrate metabolic process"/>
    <property type="evidence" value="ECO:0007669"/>
    <property type="project" value="InterPro"/>
</dbReference>
<dbReference type="GO" id="GO:0009252">
    <property type="term" value="P:peptidoglycan biosynthetic process"/>
    <property type="evidence" value="ECO:0007669"/>
    <property type="project" value="TreeGrafter"/>
</dbReference>
<dbReference type="GO" id="GO:0006048">
    <property type="term" value="P:UDP-N-acetylglucosamine biosynthetic process"/>
    <property type="evidence" value="ECO:0007669"/>
    <property type="project" value="TreeGrafter"/>
</dbReference>
<dbReference type="CDD" id="cd05802">
    <property type="entry name" value="GlmM"/>
    <property type="match status" value="1"/>
</dbReference>
<dbReference type="FunFam" id="3.30.310.50:FF:000001">
    <property type="entry name" value="Phosphoglucosamine mutase"/>
    <property type="match status" value="1"/>
</dbReference>
<dbReference type="FunFam" id="3.40.120.10:FF:000001">
    <property type="entry name" value="Phosphoglucosamine mutase"/>
    <property type="match status" value="1"/>
</dbReference>
<dbReference type="FunFam" id="3.40.120.10:FF:000002">
    <property type="entry name" value="Phosphoglucosamine mutase"/>
    <property type="match status" value="1"/>
</dbReference>
<dbReference type="Gene3D" id="3.40.120.10">
    <property type="entry name" value="Alpha-D-Glucose-1,6-Bisphosphate, subunit A, domain 3"/>
    <property type="match status" value="3"/>
</dbReference>
<dbReference type="Gene3D" id="3.30.310.50">
    <property type="entry name" value="Alpha-D-phosphohexomutase, C-terminal domain"/>
    <property type="match status" value="1"/>
</dbReference>
<dbReference type="HAMAP" id="MF_01554_B">
    <property type="entry name" value="GlmM_B"/>
    <property type="match status" value="1"/>
</dbReference>
<dbReference type="InterPro" id="IPR005844">
    <property type="entry name" value="A-D-PHexomutase_a/b/a-I"/>
</dbReference>
<dbReference type="InterPro" id="IPR016055">
    <property type="entry name" value="A-D-PHexomutase_a/b/a-I/II/III"/>
</dbReference>
<dbReference type="InterPro" id="IPR005845">
    <property type="entry name" value="A-D-PHexomutase_a/b/a-II"/>
</dbReference>
<dbReference type="InterPro" id="IPR005846">
    <property type="entry name" value="A-D-PHexomutase_a/b/a-III"/>
</dbReference>
<dbReference type="InterPro" id="IPR005843">
    <property type="entry name" value="A-D-PHexomutase_C"/>
</dbReference>
<dbReference type="InterPro" id="IPR036900">
    <property type="entry name" value="A-D-PHexomutase_C_sf"/>
</dbReference>
<dbReference type="InterPro" id="IPR016066">
    <property type="entry name" value="A-D-PHexomutase_CS"/>
</dbReference>
<dbReference type="InterPro" id="IPR005841">
    <property type="entry name" value="Alpha-D-phosphohexomutase_SF"/>
</dbReference>
<dbReference type="InterPro" id="IPR006352">
    <property type="entry name" value="GlmM_bact"/>
</dbReference>
<dbReference type="InterPro" id="IPR050060">
    <property type="entry name" value="Phosphoglucosamine_mutase"/>
</dbReference>
<dbReference type="NCBIfam" id="TIGR01455">
    <property type="entry name" value="glmM"/>
    <property type="match status" value="1"/>
</dbReference>
<dbReference type="NCBIfam" id="NF008139">
    <property type="entry name" value="PRK10887.1"/>
    <property type="match status" value="1"/>
</dbReference>
<dbReference type="PANTHER" id="PTHR42946:SF1">
    <property type="entry name" value="PHOSPHOGLUCOMUTASE (ALPHA-D-GLUCOSE-1,6-BISPHOSPHATE-DEPENDENT)"/>
    <property type="match status" value="1"/>
</dbReference>
<dbReference type="PANTHER" id="PTHR42946">
    <property type="entry name" value="PHOSPHOHEXOSE MUTASE"/>
    <property type="match status" value="1"/>
</dbReference>
<dbReference type="Pfam" id="PF02878">
    <property type="entry name" value="PGM_PMM_I"/>
    <property type="match status" value="1"/>
</dbReference>
<dbReference type="Pfam" id="PF02879">
    <property type="entry name" value="PGM_PMM_II"/>
    <property type="match status" value="1"/>
</dbReference>
<dbReference type="Pfam" id="PF02880">
    <property type="entry name" value="PGM_PMM_III"/>
    <property type="match status" value="1"/>
</dbReference>
<dbReference type="Pfam" id="PF00408">
    <property type="entry name" value="PGM_PMM_IV"/>
    <property type="match status" value="1"/>
</dbReference>
<dbReference type="PRINTS" id="PR00509">
    <property type="entry name" value="PGMPMM"/>
</dbReference>
<dbReference type="SUPFAM" id="SSF55957">
    <property type="entry name" value="Phosphoglucomutase, C-terminal domain"/>
    <property type="match status" value="1"/>
</dbReference>
<dbReference type="SUPFAM" id="SSF53738">
    <property type="entry name" value="Phosphoglucomutase, first 3 domains"/>
    <property type="match status" value="3"/>
</dbReference>
<dbReference type="PROSITE" id="PS00710">
    <property type="entry name" value="PGM_PMM"/>
    <property type="match status" value="1"/>
</dbReference>
<feature type="chain" id="PRO_1000201058" description="Phosphoglucosamine mutase">
    <location>
        <begin position="1"/>
        <end position="448"/>
    </location>
</feature>
<feature type="active site" description="Phosphoserine intermediate" evidence="1">
    <location>
        <position position="100"/>
    </location>
</feature>
<feature type="binding site" description="via phosphate group" evidence="1">
    <location>
        <position position="100"/>
    </location>
    <ligand>
        <name>Mg(2+)</name>
        <dbReference type="ChEBI" id="CHEBI:18420"/>
    </ligand>
</feature>
<feature type="binding site" evidence="1">
    <location>
        <position position="240"/>
    </location>
    <ligand>
        <name>Mg(2+)</name>
        <dbReference type="ChEBI" id="CHEBI:18420"/>
    </ligand>
</feature>
<feature type="binding site" evidence="1">
    <location>
        <position position="242"/>
    </location>
    <ligand>
        <name>Mg(2+)</name>
        <dbReference type="ChEBI" id="CHEBI:18420"/>
    </ligand>
</feature>
<feature type="binding site" evidence="1">
    <location>
        <position position="244"/>
    </location>
    <ligand>
        <name>Mg(2+)</name>
        <dbReference type="ChEBI" id="CHEBI:18420"/>
    </ligand>
</feature>
<feature type="modified residue" description="Phosphoserine" evidence="1">
    <location>
        <position position="100"/>
    </location>
</feature>
<protein>
    <recommendedName>
        <fullName evidence="1">Phosphoglucosamine mutase</fullName>
        <ecNumber evidence="1">5.4.2.10</ecNumber>
    </recommendedName>
</protein>